<proteinExistence type="inferred from homology"/>
<dbReference type="EC" id="7.1.2.2" evidence="1"/>
<dbReference type="EMBL" id="CP000382">
    <property type="protein sequence ID" value="ABK61618.1"/>
    <property type="molecule type" value="Genomic_DNA"/>
</dbReference>
<dbReference type="RefSeq" id="WP_011721735.1">
    <property type="nucleotide sequence ID" value="NC_008593.1"/>
</dbReference>
<dbReference type="SMR" id="A0PZC6"/>
<dbReference type="STRING" id="386415.NT01CX_1647"/>
<dbReference type="KEGG" id="cno:NT01CX_1647"/>
<dbReference type="eggNOG" id="COG1155">
    <property type="taxonomic scope" value="Bacteria"/>
</dbReference>
<dbReference type="HOGENOM" id="CLU_008162_3_1_9"/>
<dbReference type="Proteomes" id="UP000008220">
    <property type="component" value="Chromosome"/>
</dbReference>
<dbReference type="GO" id="GO:0045259">
    <property type="term" value="C:proton-transporting ATP synthase complex"/>
    <property type="evidence" value="ECO:0007669"/>
    <property type="project" value="UniProtKB-ARBA"/>
</dbReference>
<dbReference type="GO" id="GO:0005524">
    <property type="term" value="F:ATP binding"/>
    <property type="evidence" value="ECO:0007669"/>
    <property type="project" value="UniProtKB-UniRule"/>
</dbReference>
<dbReference type="GO" id="GO:0046933">
    <property type="term" value="F:proton-transporting ATP synthase activity, rotational mechanism"/>
    <property type="evidence" value="ECO:0007669"/>
    <property type="project" value="UniProtKB-UniRule"/>
</dbReference>
<dbReference type="GO" id="GO:0046961">
    <property type="term" value="F:proton-transporting ATPase activity, rotational mechanism"/>
    <property type="evidence" value="ECO:0007669"/>
    <property type="project" value="InterPro"/>
</dbReference>
<dbReference type="GO" id="GO:0042777">
    <property type="term" value="P:proton motive force-driven plasma membrane ATP synthesis"/>
    <property type="evidence" value="ECO:0007669"/>
    <property type="project" value="UniProtKB-UniRule"/>
</dbReference>
<dbReference type="CDD" id="cd18111">
    <property type="entry name" value="ATP-synt_V_A-type_alpha_C"/>
    <property type="match status" value="1"/>
</dbReference>
<dbReference type="CDD" id="cd18119">
    <property type="entry name" value="ATP-synt_V_A-type_alpha_N"/>
    <property type="match status" value="1"/>
</dbReference>
<dbReference type="CDD" id="cd01134">
    <property type="entry name" value="V_A-ATPase_A"/>
    <property type="match status" value="1"/>
</dbReference>
<dbReference type="FunFam" id="3.40.50.300:FF:000675">
    <property type="entry name" value="V-type ATP synthase alpha chain"/>
    <property type="match status" value="1"/>
</dbReference>
<dbReference type="FunFam" id="1.10.1140.10:FF:000002">
    <property type="entry name" value="V-type proton ATPase catalytic subunit A"/>
    <property type="match status" value="1"/>
</dbReference>
<dbReference type="FunFam" id="2.40.30.20:FF:000002">
    <property type="entry name" value="V-type proton ATPase catalytic subunit A"/>
    <property type="match status" value="1"/>
</dbReference>
<dbReference type="FunFam" id="2.40.50.100:FF:000008">
    <property type="entry name" value="V-type proton ATPase catalytic subunit A"/>
    <property type="match status" value="1"/>
</dbReference>
<dbReference type="Gene3D" id="2.40.30.20">
    <property type="match status" value="1"/>
</dbReference>
<dbReference type="Gene3D" id="2.40.50.100">
    <property type="match status" value="1"/>
</dbReference>
<dbReference type="Gene3D" id="1.10.1140.10">
    <property type="entry name" value="Bovine Mitochondrial F1-atpase, Atp Synthase Beta Chain, Chain D, domain 3"/>
    <property type="match status" value="1"/>
</dbReference>
<dbReference type="Gene3D" id="3.40.50.300">
    <property type="entry name" value="P-loop containing nucleotide triphosphate hydrolases"/>
    <property type="match status" value="1"/>
</dbReference>
<dbReference type="HAMAP" id="MF_00309">
    <property type="entry name" value="ATP_synth_A_arch"/>
    <property type="match status" value="1"/>
</dbReference>
<dbReference type="InterPro" id="IPR055190">
    <property type="entry name" value="ATP-synt_VA_C"/>
</dbReference>
<dbReference type="InterPro" id="IPR031686">
    <property type="entry name" value="ATP-synth_a_Xtn"/>
</dbReference>
<dbReference type="InterPro" id="IPR023366">
    <property type="entry name" value="ATP_synth_asu-like_sf"/>
</dbReference>
<dbReference type="InterPro" id="IPR020003">
    <property type="entry name" value="ATPase_a/bsu_AS"/>
</dbReference>
<dbReference type="InterPro" id="IPR004100">
    <property type="entry name" value="ATPase_F1/V1/A1_a/bsu_N"/>
</dbReference>
<dbReference type="InterPro" id="IPR036121">
    <property type="entry name" value="ATPase_F1/V1/A1_a/bsu_N_sf"/>
</dbReference>
<dbReference type="InterPro" id="IPR000194">
    <property type="entry name" value="ATPase_F1/V1/A1_a/bsu_nucl-bd"/>
</dbReference>
<dbReference type="InterPro" id="IPR024034">
    <property type="entry name" value="ATPase_F1/V1_b/a_C"/>
</dbReference>
<dbReference type="InterPro" id="IPR027417">
    <property type="entry name" value="P-loop_NTPase"/>
</dbReference>
<dbReference type="InterPro" id="IPR022878">
    <property type="entry name" value="V-ATPase_asu"/>
</dbReference>
<dbReference type="NCBIfam" id="NF003220">
    <property type="entry name" value="PRK04192.1"/>
    <property type="match status" value="1"/>
</dbReference>
<dbReference type="PANTHER" id="PTHR43607:SF1">
    <property type="entry name" value="H(+)-TRANSPORTING TWO-SECTOR ATPASE"/>
    <property type="match status" value="1"/>
</dbReference>
<dbReference type="PANTHER" id="PTHR43607">
    <property type="entry name" value="V-TYPE PROTON ATPASE CATALYTIC SUBUNIT A"/>
    <property type="match status" value="1"/>
</dbReference>
<dbReference type="Pfam" id="PF00006">
    <property type="entry name" value="ATP-synt_ab"/>
    <property type="match status" value="1"/>
</dbReference>
<dbReference type="Pfam" id="PF02874">
    <property type="entry name" value="ATP-synt_ab_N"/>
    <property type="match status" value="1"/>
</dbReference>
<dbReference type="Pfam" id="PF16886">
    <property type="entry name" value="ATP-synt_ab_Xtn"/>
    <property type="match status" value="1"/>
</dbReference>
<dbReference type="Pfam" id="PF22919">
    <property type="entry name" value="ATP-synt_VA_C"/>
    <property type="match status" value="1"/>
</dbReference>
<dbReference type="SUPFAM" id="SSF47917">
    <property type="entry name" value="C-terminal domain of alpha and beta subunits of F1 ATP synthase"/>
    <property type="match status" value="1"/>
</dbReference>
<dbReference type="SUPFAM" id="SSF50615">
    <property type="entry name" value="N-terminal domain of alpha and beta subunits of F1 ATP synthase"/>
    <property type="match status" value="1"/>
</dbReference>
<dbReference type="SUPFAM" id="SSF52540">
    <property type="entry name" value="P-loop containing nucleoside triphosphate hydrolases"/>
    <property type="match status" value="1"/>
</dbReference>
<dbReference type="PROSITE" id="PS00152">
    <property type="entry name" value="ATPASE_ALPHA_BETA"/>
    <property type="match status" value="1"/>
</dbReference>
<keyword id="KW-0066">ATP synthesis</keyword>
<keyword id="KW-0067">ATP-binding</keyword>
<keyword id="KW-0375">Hydrogen ion transport</keyword>
<keyword id="KW-0406">Ion transport</keyword>
<keyword id="KW-0547">Nucleotide-binding</keyword>
<keyword id="KW-1185">Reference proteome</keyword>
<keyword id="KW-1278">Translocase</keyword>
<keyword id="KW-0813">Transport</keyword>
<reference key="1">
    <citation type="journal article" date="2006" name="Nat. Biotechnol.">
        <title>The genome and transcriptomes of the anti-tumor agent Clostridium novyi-NT.</title>
        <authorList>
            <person name="Bettegowda C."/>
            <person name="Huang X."/>
            <person name="Lin J."/>
            <person name="Cheong I."/>
            <person name="Kohli M."/>
            <person name="Szabo S.A."/>
            <person name="Zhang X."/>
            <person name="Diaz L.A. Jr."/>
            <person name="Velculescu V.E."/>
            <person name="Parmigiani G."/>
            <person name="Kinzler K.W."/>
            <person name="Vogelstein B."/>
            <person name="Zhou S."/>
        </authorList>
    </citation>
    <scope>NUCLEOTIDE SEQUENCE [LARGE SCALE GENOMIC DNA]</scope>
    <source>
        <strain>NT</strain>
    </source>
</reference>
<protein>
    <recommendedName>
        <fullName evidence="1">V-type ATP synthase alpha chain</fullName>
        <ecNumber evidence="1">7.1.2.2</ecNumber>
    </recommendedName>
    <alternativeName>
        <fullName evidence="1">V-ATPase subunit A</fullName>
    </alternativeName>
</protein>
<name>VATA_CLONN</name>
<accession>A0PZC6</accession>
<comment type="function">
    <text evidence="1">Produces ATP from ADP in the presence of a proton gradient across the membrane. The V-type alpha chain is a catalytic subunit.</text>
</comment>
<comment type="catalytic activity">
    <reaction evidence="1">
        <text>ATP + H2O + 4 H(+)(in) = ADP + phosphate + 5 H(+)(out)</text>
        <dbReference type="Rhea" id="RHEA:57720"/>
        <dbReference type="ChEBI" id="CHEBI:15377"/>
        <dbReference type="ChEBI" id="CHEBI:15378"/>
        <dbReference type="ChEBI" id="CHEBI:30616"/>
        <dbReference type="ChEBI" id="CHEBI:43474"/>
        <dbReference type="ChEBI" id="CHEBI:456216"/>
        <dbReference type="EC" id="7.1.2.2"/>
    </reaction>
</comment>
<comment type="similarity">
    <text evidence="1">Belongs to the ATPase alpha/beta chains family.</text>
</comment>
<gene>
    <name evidence="1" type="primary">atpA</name>
    <name type="ordered locus">NT01CX_1647</name>
</gene>
<organism>
    <name type="scientific">Clostridium novyi (strain NT)</name>
    <dbReference type="NCBI Taxonomy" id="386415"/>
    <lineage>
        <taxon>Bacteria</taxon>
        <taxon>Bacillati</taxon>
        <taxon>Bacillota</taxon>
        <taxon>Clostridia</taxon>
        <taxon>Eubacteriales</taxon>
        <taxon>Clostridiaceae</taxon>
        <taxon>Clostridium</taxon>
    </lineage>
</organism>
<sequence length="591" mass="65711">MKTGRVIKVSGPLVIAEGMEEANIYDLVKVGEKRLIGEIIEMRGDKASIQVYEETTGLGPGAPVETTGEPLSVELGPGLIESMFDGIQRPLEAIAKKAGSYLTKGIEVFSLNRDKKWHFVPKVKHSDKVKAGDILGTVQETEVVNHKIMVPYGIEGEVITIFEGDYTVEDVVCEIDTKDGVKKVKLMQKWPVRKGRPYAKKLNPEAPLVTGQRIIDTFFPVAKGGAAAVPGPFGSGKTVVQHQLAKWGDAQIVVYIGCGERGNEMTDVLNEFPELKDPKTGKSIMERTVLIANTSNMPVAAREACIYTGITIAEYFRDMGYSVALMADSTSRWAEALREMSGRLEEMPGDEGYPAYLGSRLADFYERAGKVVCLGDDEREGAITAIGAVSPPGGDLSEPVTQATLRIVKVFWGLDAQLAYRRHFPAINWLNSYSLYLDSIGRWMDRNVSEEWVDLRTRAMTILQEEANLEEIVRLVGIDALSESDRLKLEVAKSIREDYLMQNAFHDVDTYSSLEKQYKMLKLVLSFQDEAERALKAGVYLEKITSMVELRDKIARAKFIPEEEMGRIDEIGEELRREIDKLIAEEGVINA</sequence>
<evidence type="ECO:0000255" key="1">
    <source>
        <dbReference type="HAMAP-Rule" id="MF_00309"/>
    </source>
</evidence>
<feature type="chain" id="PRO_1000059336" description="V-type ATP synthase alpha chain">
    <location>
        <begin position="1"/>
        <end position="591"/>
    </location>
</feature>
<feature type="binding site" evidence="1">
    <location>
        <begin position="231"/>
        <end position="238"/>
    </location>
    <ligand>
        <name>ATP</name>
        <dbReference type="ChEBI" id="CHEBI:30616"/>
    </ligand>
</feature>